<feature type="signal peptide" evidence="3">
    <location>
        <begin position="1"/>
        <end position="21"/>
    </location>
</feature>
<feature type="chain" id="PRO_0000327908" description="Countin-1">
    <location>
        <begin position="22"/>
        <end position="258"/>
    </location>
</feature>
<feature type="domain" description="Saposin B-type" evidence="1">
    <location>
        <begin position="22"/>
        <end position="106"/>
    </location>
</feature>
<feature type="region of interest" description="Disordered" evidence="2">
    <location>
        <begin position="233"/>
        <end position="258"/>
    </location>
</feature>
<feature type="compositionally biased region" description="Low complexity" evidence="2">
    <location>
        <begin position="233"/>
        <end position="248"/>
    </location>
</feature>
<feature type="compositionally biased region" description="Gly residues" evidence="2">
    <location>
        <begin position="249"/>
        <end position="258"/>
    </location>
</feature>
<feature type="glycosylation site" description="N-linked (GlcNAc...) asparagine" evidence="1">
    <location>
        <position position="121"/>
    </location>
</feature>
<feature type="glycosylation site" description="N-linked (GlcNAc...) asparagine" evidence="1">
    <location>
        <position position="215"/>
    </location>
</feature>
<feature type="disulfide bond" evidence="1">
    <location>
        <begin position="25"/>
        <end position="102"/>
    </location>
</feature>
<feature type="disulfide bond" evidence="1">
    <location>
        <begin position="28"/>
        <end position="96"/>
    </location>
</feature>
<feature type="disulfide bond" evidence="1">
    <location>
        <begin position="56"/>
        <end position="69"/>
    </location>
</feature>
<feature type="sequence conflict" description="In Ref. 1; AAD53482." evidence="9" ref="1">
    <location>
        <position position="45"/>
    </location>
</feature>
<comment type="function">
    <text evidence="3 4 5">Cell-counting factor that limits the maximum size of the multicellular structure. May down-regulate the expression of gp24, which mediates cell adhesion.</text>
</comment>
<comment type="subunit">
    <text evidence="3 6 7 8">Component of the counting factor (CF) complex, which includes cf60, cf50, cf45-1 and ctnA.</text>
</comment>
<comment type="subcellular location">
    <subcellularLocation>
        <location evidence="3">Secreted</location>
    </subcellularLocation>
</comment>
<comment type="developmental stage">
    <text evidence="3 5">Highly expressed in the vegetative cells and decreases during subsequent developmental stages (6-24 hours).</text>
</comment>
<comment type="disruption phenotype">
    <text evidence="3">Cells form a fewer number of larger aggregates.</text>
</comment>
<comment type="similarity">
    <text evidence="9">Belongs to the countin family.</text>
</comment>
<dbReference type="EMBL" id="AF140780">
    <property type="protein sequence ID" value="AAD53482.1"/>
    <property type="molecule type" value="Genomic_DNA"/>
</dbReference>
<dbReference type="EMBL" id="AAFI02000012">
    <property type="protein sequence ID" value="EAL70191.1"/>
    <property type="molecule type" value="Genomic_DNA"/>
</dbReference>
<dbReference type="RefSeq" id="XP_643887.1">
    <property type="nucleotide sequence ID" value="XM_638795.1"/>
</dbReference>
<dbReference type="SMR" id="Q86IV5"/>
<dbReference type="FunCoup" id="Q86IV5">
    <property type="interactions" value="13"/>
</dbReference>
<dbReference type="STRING" id="44689.Q86IV5"/>
<dbReference type="TCDB" id="1.C.35.4.1">
    <property type="family name" value="the amoebapore (amoebapore) family"/>
</dbReference>
<dbReference type="GlyCosmos" id="Q86IV5">
    <property type="glycosylation" value="2 sites, No reported glycans"/>
</dbReference>
<dbReference type="GlyGen" id="Q86IV5">
    <property type="glycosylation" value="3 sites"/>
</dbReference>
<dbReference type="PaxDb" id="44689-DDB0185089"/>
<dbReference type="EnsemblProtists" id="EAL70191">
    <property type="protein sequence ID" value="EAL70191"/>
    <property type="gene ID" value="DDB_G0274597"/>
</dbReference>
<dbReference type="GeneID" id="8619313"/>
<dbReference type="KEGG" id="ddi:DDB_G0274597"/>
<dbReference type="dictyBase" id="DDB_G0274597">
    <property type="gene designation" value="ctnA"/>
</dbReference>
<dbReference type="VEuPathDB" id="AmoebaDB:DDB_G0274597"/>
<dbReference type="eggNOG" id="ENOG502S5J5">
    <property type="taxonomic scope" value="Eukaryota"/>
</dbReference>
<dbReference type="HOGENOM" id="CLU_095805_0_0_1"/>
<dbReference type="InParanoid" id="Q86IV5"/>
<dbReference type="OMA" id="QGPCEQW"/>
<dbReference type="PhylomeDB" id="Q86IV5"/>
<dbReference type="PRO" id="PR:Q86IV5"/>
<dbReference type="Proteomes" id="UP000002195">
    <property type="component" value="Chromosome 2"/>
</dbReference>
<dbReference type="GO" id="GO:0031410">
    <property type="term" value="C:cytoplasmic vesicle"/>
    <property type="evidence" value="ECO:0000314"/>
    <property type="project" value="dictyBase"/>
</dbReference>
<dbReference type="GO" id="GO:0005576">
    <property type="term" value="C:extracellular region"/>
    <property type="evidence" value="ECO:0000314"/>
    <property type="project" value="dictyBase"/>
</dbReference>
<dbReference type="GO" id="GO:0030041">
    <property type="term" value="P:actin filament polymerization"/>
    <property type="evidence" value="ECO:0000314"/>
    <property type="project" value="dictyBase"/>
</dbReference>
<dbReference type="GO" id="GO:0140582">
    <property type="term" value="P:adenylate cyclase-activating G protein-coupled cAMP receptor signaling pathway"/>
    <property type="evidence" value="ECO:0000314"/>
    <property type="project" value="dictyBase"/>
</dbReference>
<dbReference type="GO" id="GO:0048870">
    <property type="term" value="P:cell motility"/>
    <property type="evidence" value="ECO:0000314"/>
    <property type="project" value="dictyBase"/>
</dbReference>
<dbReference type="GO" id="GO:0051156">
    <property type="term" value="P:glucose 6-phosphate metabolic process"/>
    <property type="evidence" value="ECO:0000315"/>
    <property type="project" value="dictyBase"/>
</dbReference>
<dbReference type="GO" id="GO:0042593">
    <property type="term" value="P:glucose homeostasis"/>
    <property type="evidence" value="ECO:0000315"/>
    <property type="project" value="dictyBase"/>
</dbReference>
<dbReference type="GO" id="GO:0006971">
    <property type="term" value="P:hypotonic response"/>
    <property type="evidence" value="ECO:0000314"/>
    <property type="project" value="dictyBase"/>
</dbReference>
<dbReference type="GO" id="GO:0001678">
    <property type="term" value="P:intracellular glucose homeostasis"/>
    <property type="evidence" value="ECO:0000315"/>
    <property type="project" value="dictyBase"/>
</dbReference>
<dbReference type="GO" id="GO:0098727">
    <property type="term" value="P:maintenance of cell number"/>
    <property type="evidence" value="ECO:0000314"/>
    <property type="project" value="dictyBase"/>
</dbReference>
<dbReference type="GO" id="GO:0007162">
    <property type="term" value="P:negative regulation of cell adhesion"/>
    <property type="evidence" value="ECO:0000314"/>
    <property type="project" value="dictyBase"/>
</dbReference>
<dbReference type="GO" id="GO:0010754">
    <property type="term" value="P:negative regulation of cGMP-mediated signaling"/>
    <property type="evidence" value="ECO:0000315"/>
    <property type="project" value="dictyBase"/>
</dbReference>
<dbReference type="GO" id="GO:0040015">
    <property type="term" value="P:negative regulation of multicellular organism growth"/>
    <property type="evidence" value="ECO:0000315"/>
    <property type="project" value="dictyBase"/>
</dbReference>
<dbReference type="GO" id="GO:0106071">
    <property type="term" value="P:positive regulation of adenylate cyclase-activating G protein-coupled receptor signaling pathway"/>
    <property type="evidence" value="ECO:0000315"/>
    <property type="project" value="dictyBase"/>
</dbReference>
<dbReference type="GO" id="GO:0031157">
    <property type="term" value="P:regulation of aggregate size involved in sorocarp development"/>
    <property type="evidence" value="ECO:0000315"/>
    <property type="project" value="dictyBase"/>
</dbReference>
<dbReference type="GO" id="GO:0010225">
    <property type="term" value="P:response to UV-C"/>
    <property type="evidence" value="ECO:0000314"/>
    <property type="project" value="dictyBase"/>
</dbReference>
<dbReference type="InterPro" id="IPR008139">
    <property type="entry name" value="SaposinB_dom"/>
</dbReference>
<dbReference type="SMART" id="SM00741">
    <property type="entry name" value="SapB"/>
    <property type="match status" value="1"/>
</dbReference>
<dbReference type="PROSITE" id="PS50015">
    <property type="entry name" value="SAP_B"/>
    <property type="match status" value="1"/>
</dbReference>
<reference key="1">
    <citation type="journal article" date="1999" name="Genes Dev.">
        <title>A cell-counting factor regulating structure size in Dictyostelium.</title>
        <authorList>
            <person name="Brock D.A."/>
            <person name="Gomer R.H."/>
        </authorList>
    </citation>
    <scope>NUCLEOTIDE SEQUENCE [MRNA]</scope>
    <scope>PROTEIN SEQUENCE OF 22-41</scope>
    <scope>IDENTIFICATION IN THE CF COMPLEX</scope>
    <scope>DEVELOPMENTAL STAGE</scope>
    <scope>SUBCELLULAR LOCATION</scope>
    <scope>FUNCTION</scope>
    <scope>DISRUPTION PHENOTYPE</scope>
</reference>
<reference key="2">
    <citation type="journal article" date="2002" name="Nature">
        <title>Sequence and analysis of chromosome 2 of Dictyostelium discoideum.</title>
        <authorList>
            <person name="Gloeckner G."/>
            <person name="Eichinger L."/>
            <person name="Szafranski K."/>
            <person name="Pachebat J.A."/>
            <person name="Bankier A.T."/>
            <person name="Dear P.H."/>
            <person name="Lehmann R."/>
            <person name="Baumgart C."/>
            <person name="Parra G."/>
            <person name="Abril J.F."/>
            <person name="Guigo R."/>
            <person name="Kumpf K."/>
            <person name="Tunggal B."/>
            <person name="Cox E.C."/>
            <person name="Quail M.A."/>
            <person name="Platzer M."/>
            <person name="Rosenthal A."/>
            <person name="Noegel A.A."/>
        </authorList>
    </citation>
    <scope>NUCLEOTIDE SEQUENCE [LARGE SCALE GENOMIC DNA]</scope>
    <source>
        <strain>AX4</strain>
    </source>
</reference>
<reference key="3">
    <citation type="journal article" date="2005" name="Nature">
        <title>The genome of the social amoeba Dictyostelium discoideum.</title>
        <authorList>
            <person name="Eichinger L."/>
            <person name="Pachebat J.A."/>
            <person name="Gloeckner G."/>
            <person name="Rajandream M.A."/>
            <person name="Sucgang R."/>
            <person name="Berriman M."/>
            <person name="Song J."/>
            <person name="Olsen R."/>
            <person name="Szafranski K."/>
            <person name="Xu Q."/>
            <person name="Tunggal B."/>
            <person name="Kummerfeld S."/>
            <person name="Madera M."/>
            <person name="Konfortov B.A."/>
            <person name="Rivero F."/>
            <person name="Bankier A.T."/>
            <person name="Lehmann R."/>
            <person name="Hamlin N."/>
            <person name="Davies R."/>
            <person name="Gaudet P."/>
            <person name="Fey P."/>
            <person name="Pilcher K."/>
            <person name="Chen G."/>
            <person name="Saunders D."/>
            <person name="Sodergren E.J."/>
            <person name="Davis P."/>
            <person name="Kerhornou A."/>
            <person name="Nie X."/>
            <person name="Hall N."/>
            <person name="Anjard C."/>
            <person name="Hemphill L."/>
            <person name="Bason N."/>
            <person name="Farbrother P."/>
            <person name="Desany B."/>
            <person name="Just E."/>
            <person name="Morio T."/>
            <person name="Rost R."/>
            <person name="Churcher C.M."/>
            <person name="Cooper J."/>
            <person name="Haydock S."/>
            <person name="van Driessche N."/>
            <person name="Cronin A."/>
            <person name="Goodhead I."/>
            <person name="Muzny D.M."/>
            <person name="Mourier T."/>
            <person name="Pain A."/>
            <person name="Lu M."/>
            <person name="Harper D."/>
            <person name="Lindsay R."/>
            <person name="Hauser H."/>
            <person name="James K.D."/>
            <person name="Quiles M."/>
            <person name="Madan Babu M."/>
            <person name="Saito T."/>
            <person name="Buchrieser C."/>
            <person name="Wardroper A."/>
            <person name="Felder M."/>
            <person name="Thangavelu M."/>
            <person name="Johnson D."/>
            <person name="Knights A."/>
            <person name="Loulseged H."/>
            <person name="Mungall K.L."/>
            <person name="Oliver K."/>
            <person name="Price C."/>
            <person name="Quail M.A."/>
            <person name="Urushihara H."/>
            <person name="Hernandez J."/>
            <person name="Rabbinowitsch E."/>
            <person name="Steffen D."/>
            <person name="Sanders M."/>
            <person name="Ma J."/>
            <person name="Kohara Y."/>
            <person name="Sharp S."/>
            <person name="Simmonds M.N."/>
            <person name="Spiegler S."/>
            <person name="Tivey A."/>
            <person name="Sugano S."/>
            <person name="White B."/>
            <person name="Walker D."/>
            <person name="Woodward J.R."/>
            <person name="Winckler T."/>
            <person name="Tanaka Y."/>
            <person name="Shaulsky G."/>
            <person name="Schleicher M."/>
            <person name="Weinstock G.M."/>
            <person name="Rosenthal A."/>
            <person name="Cox E.C."/>
            <person name="Chisholm R.L."/>
            <person name="Gibbs R.A."/>
            <person name="Loomis W.F."/>
            <person name="Platzer M."/>
            <person name="Kay R.R."/>
            <person name="Williams J.G."/>
            <person name="Dear P.H."/>
            <person name="Noegel A.A."/>
            <person name="Barrell B.G."/>
            <person name="Kuspa A."/>
        </authorList>
    </citation>
    <scope>NUCLEOTIDE SEQUENCE [LARGE SCALE GENOMIC DNA]</scope>
    <source>
        <strain>AX4</strain>
    </source>
</reference>
<reference key="4">
    <citation type="journal article" date="2000" name="Mol. Cell">
        <title>A precise group size in Dictyostelium is generated by a cell-counting factor modulating cell-cell adhesion.</title>
        <authorList>
            <person name="Roisin-Bouffay C."/>
            <person name="Jang W."/>
            <person name="Caprette D.R."/>
            <person name="Gomer R.H."/>
        </authorList>
    </citation>
    <scope>FUNCTION</scope>
</reference>
<reference key="5">
    <citation type="journal article" date="2001" name="Dev. Growth Differ.">
        <title>Two cell-counting factors regulate the aggregate size of the cellular slime mold Dictyostelium discoideum.</title>
        <authorList>
            <person name="Okuwa T."/>
            <person name="Katayama T."/>
            <person name="Takano A."/>
            <person name="Kodaira K."/>
            <person name="Yasukawa H."/>
        </authorList>
    </citation>
    <scope>FUNCTION</scope>
    <scope>DEVELOPMENTAL STAGE</scope>
</reference>
<reference key="6">
    <citation type="journal article" date="2002" name="Development">
        <title>The different components of a multisubunit cell number-counting factor have both unique and overlapping functions.</title>
        <authorList>
            <person name="Brock D.A."/>
            <person name="Hatton R.D."/>
            <person name="Giurgiutiu D.-V."/>
            <person name="Scott B."/>
            <person name="Ammann R."/>
            <person name="Gomer R.H."/>
        </authorList>
    </citation>
    <scope>IDENTIFICATION IN THE CF COMPLEX</scope>
</reference>
<reference key="7">
    <citation type="journal article" date="2003" name="Eukaryot. Cell">
        <title>CF45-1, a secreted protein which participates in Dictyostelium group size regulation.</title>
        <authorList>
            <person name="Brock D.A."/>
            <person name="Hatton R.D."/>
            <person name="Giurgiutiu D.-V."/>
            <person name="Scott B."/>
            <person name="Jang W."/>
            <person name="Ammann R."/>
            <person name="Gomer R.H."/>
        </authorList>
    </citation>
    <scope>IDENTIFICATION IN THE CF COMPLEX</scope>
</reference>
<reference key="8">
    <citation type="journal article" date="2006" name="Eukaryot. Cell">
        <title>A 60-kilodalton protein component of the counting factor complex regulates group size in Dictyostelium discoideum.</title>
        <authorList>
            <person name="Brock D.A."/>
            <person name="van Egmond W.N."/>
            <person name="Shamoo Y."/>
            <person name="Hatton R.D."/>
            <person name="Gomer R.H."/>
        </authorList>
    </citation>
    <scope>IDENTIFICATION IN THE CF COMPLEX</scope>
</reference>
<protein>
    <recommendedName>
        <fullName>Countin-1</fullName>
    </recommendedName>
</protein>
<evidence type="ECO:0000255" key="1">
    <source>
        <dbReference type="PROSITE-ProRule" id="PRU00415"/>
    </source>
</evidence>
<evidence type="ECO:0000256" key="2">
    <source>
        <dbReference type="SAM" id="MobiDB-lite"/>
    </source>
</evidence>
<evidence type="ECO:0000269" key="3">
    <source>
    </source>
</evidence>
<evidence type="ECO:0000269" key="4">
    <source>
    </source>
</evidence>
<evidence type="ECO:0000269" key="5">
    <source>
    </source>
</evidence>
<evidence type="ECO:0000269" key="6">
    <source>
    </source>
</evidence>
<evidence type="ECO:0000269" key="7">
    <source>
    </source>
</evidence>
<evidence type="ECO:0000269" key="8">
    <source>
    </source>
</evidence>
<evidence type="ECO:0000305" key="9"/>
<name>CTNA_DICDI</name>
<gene>
    <name type="primary">ctnA</name>
    <name type="ORF">DDB_G0274597</name>
</gene>
<accession>Q86IV5</accession>
<accession>Q556C3</accession>
<accession>Q9U7C4</accession>
<proteinExistence type="evidence at protein level"/>
<keyword id="KW-0903">Direct protein sequencing</keyword>
<keyword id="KW-1015">Disulfide bond</keyword>
<keyword id="KW-0325">Glycoprotein</keyword>
<keyword id="KW-1185">Reference proteome</keyword>
<keyword id="KW-0964">Secreted</keyword>
<keyword id="KW-0732">Signal</keyword>
<organism>
    <name type="scientific">Dictyostelium discoideum</name>
    <name type="common">Social amoeba</name>
    <dbReference type="NCBI Taxonomy" id="44689"/>
    <lineage>
        <taxon>Eukaryota</taxon>
        <taxon>Amoebozoa</taxon>
        <taxon>Evosea</taxon>
        <taxon>Eumycetozoa</taxon>
        <taxon>Dictyostelia</taxon>
        <taxon>Dictyosteliales</taxon>
        <taxon>Dictyosteliaceae</taxon>
        <taxon>Dictyostelium</taxon>
    </lineage>
</organism>
<sequence length="258" mass="26659">MNKLFSLILALFLVNSAVVSSLDSCSICVDFVGNSLNDLLNIILNSGVIGTCGDLCSAVPGGQIVDTVCDLLCDYVGVDEFIKLISDVDPDPIYICEKISVCKTNDNAAASLDLVQINPQNGTVGGTFTLSIAYTVTNTIATGQLAFNIIDPTGNAFGDAVLLVQQSPEQYTQQFQFQATPSEQESFPNGLYTVQALVCEGSCGSPHPNTYTLANGTTTFTISGADSSSMSGAGSFSGSSQSTQTGAASGSGSGFALF</sequence>